<organism>
    <name type="scientific">Opitutus terrae (strain DSM 11246 / JCM 15787 / PB90-1)</name>
    <dbReference type="NCBI Taxonomy" id="452637"/>
    <lineage>
        <taxon>Bacteria</taxon>
        <taxon>Pseudomonadati</taxon>
        <taxon>Verrucomicrobiota</taxon>
        <taxon>Opitutia</taxon>
        <taxon>Opitutales</taxon>
        <taxon>Opitutaceae</taxon>
        <taxon>Opitutus</taxon>
    </lineage>
</organism>
<accession>B1ZMR3</accession>
<feature type="chain" id="PRO_0000380435" description="DNA ligase 2">
    <location>
        <begin position="1"/>
        <end position="708"/>
    </location>
</feature>
<feature type="domain" description="BRCT" evidence="1">
    <location>
        <begin position="627"/>
        <end position="708"/>
    </location>
</feature>
<feature type="active site" description="N6-AMP-lysine intermediate" evidence="1">
    <location>
        <position position="155"/>
    </location>
</feature>
<feature type="binding site" evidence="1">
    <location>
        <begin position="71"/>
        <end position="75"/>
    </location>
    <ligand>
        <name>NAD(+)</name>
        <dbReference type="ChEBI" id="CHEBI:57540"/>
    </ligand>
</feature>
<feature type="binding site" evidence="1">
    <location>
        <begin position="121"/>
        <end position="122"/>
    </location>
    <ligand>
        <name>NAD(+)</name>
        <dbReference type="ChEBI" id="CHEBI:57540"/>
    </ligand>
</feature>
<feature type="binding site" evidence="1">
    <location>
        <position position="153"/>
    </location>
    <ligand>
        <name>NAD(+)</name>
        <dbReference type="ChEBI" id="CHEBI:57540"/>
    </ligand>
</feature>
<feature type="binding site" evidence="1">
    <location>
        <position position="176"/>
    </location>
    <ligand>
        <name>NAD(+)</name>
        <dbReference type="ChEBI" id="CHEBI:57540"/>
    </ligand>
</feature>
<feature type="binding site" evidence="1">
    <location>
        <position position="213"/>
    </location>
    <ligand>
        <name>NAD(+)</name>
        <dbReference type="ChEBI" id="CHEBI:57540"/>
    </ligand>
</feature>
<feature type="binding site" evidence="1">
    <location>
        <position position="330"/>
    </location>
    <ligand>
        <name>NAD(+)</name>
        <dbReference type="ChEBI" id="CHEBI:57540"/>
    </ligand>
</feature>
<feature type="binding site" evidence="1">
    <location>
        <position position="354"/>
    </location>
    <ligand>
        <name>NAD(+)</name>
        <dbReference type="ChEBI" id="CHEBI:57540"/>
    </ligand>
</feature>
<feature type="binding site" evidence="1">
    <location>
        <position position="448"/>
    </location>
    <ligand>
        <name>Zn(2+)</name>
        <dbReference type="ChEBI" id="CHEBI:29105"/>
    </ligand>
</feature>
<feature type="binding site" evidence="1">
    <location>
        <position position="451"/>
    </location>
    <ligand>
        <name>Zn(2+)</name>
        <dbReference type="ChEBI" id="CHEBI:29105"/>
    </ligand>
</feature>
<feature type="binding site" evidence="1">
    <location>
        <position position="466"/>
    </location>
    <ligand>
        <name>Zn(2+)</name>
        <dbReference type="ChEBI" id="CHEBI:29105"/>
    </ligand>
</feature>
<feature type="binding site" evidence="1">
    <location>
        <position position="471"/>
    </location>
    <ligand>
        <name>Zn(2+)</name>
        <dbReference type="ChEBI" id="CHEBI:29105"/>
    </ligand>
</feature>
<sequence>MRPWFSSVARRLALGASLGVVALTVIPNLSCAARSVSVAETESLRRLELLRVEIARHDDLYFRKAQPEISDADYDALKQELRELESRFGRRVPRDPAALRDMGDDRVSGFPKARHRMRMLSLEKTTTESGVRAFDQALRRLVKPPAEIAYVVEPKFDGLAISATYEEGRLVRLVTRGNGEEGDDVTAAAGRIRTLPPRLAGAAWPRVVEVRGEVFLTFAEFERINRGRRENGRPTFSSPRNLAVGTLKSLEPEDREVRQLDVVFFGLGAIDGHAAPASQTQLLEWIAQWGLPSVEDARRVDSIDDAWRAVQELGGRRSHLAFPIDGAVIKLDDAVGQTAAGVSEVAPRWAIAFKYAPARVGTRVRGVALQVGRTGVITPVAELEPVALAGARITRATLHNASEMERSDLRVGDFVWIERMGEIIPAVVAVDTAQRGTVSAPFVFPRDCPGCGALLVRALDDANWRCTNDDCPARQVRKVEHYVSDEGVGIRGLGAASVEALVRSQRVREIPDLYTLTAAEVTAHTRLSAAQAARVVDAIQRSRKAPLRRVIAGLGLPGIGPAGANALGARFADLPQFAAARESDLQQVEGLRPESVRALATALSAERTQQLLARLAAAGVGAQSATADAGTLAGKEVVFTGTLPTLSRRRATELVEEAGGRVADRVTAATWRLVAGRNPASKLHQATALGVPVIEEAELLRLAEAAPE</sequence>
<dbReference type="EC" id="6.5.1.2" evidence="1"/>
<dbReference type="EMBL" id="CP001032">
    <property type="protein sequence ID" value="ACB75341.1"/>
    <property type="molecule type" value="Genomic_DNA"/>
</dbReference>
<dbReference type="RefSeq" id="WP_012374878.1">
    <property type="nucleotide sequence ID" value="NC_010571.1"/>
</dbReference>
<dbReference type="SMR" id="B1ZMR3"/>
<dbReference type="STRING" id="452637.Oter_2058"/>
<dbReference type="KEGG" id="ote:Oter_2058"/>
<dbReference type="eggNOG" id="COG0272">
    <property type="taxonomic scope" value="Bacteria"/>
</dbReference>
<dbReference type="HOGENOM" id="CLU_007764_2_1_0"/>
<dbReference type="OrthoDB" id="9759736at2"/>
<dbReference type="Proteomes" id="UP000007013">
    <property type="component" value="Chromosome"/>
</dbReference>
<dbReference type="GO" id="GO:0005829">
    <property type="term" value="C:cytosol"/>
    <property type="evidence" value="ECO:0007669"/>
    <property type="project" value="TreeGrafter"/>
</dbReference>
<dbReference type="GO" id="GO:0003911">
    <property type="term" value="F:DNA ligase (NAD+) activity"/>
    <property type="evidence" value="ECO:0007669"/>
    <property type="project" value="UniProtKB-UniRule"/>
</dbReference>
<dbReference type="GO" id="GO:0046872">
    <property type="term" value="F:metal ion binding"/>
    <property type="evidence" value="ECO:0007669"/>
    <property type="project" value="UniProtKB-KW"/>
</dbReference>
<dbReference type="GO" id="GO:0006281">
    <property type="term" value="P:DNA repair"/>
    <property type="evidence" value="ECO:0007669"/>
    <property type="project" value="UniProtKB-KW"/>
</dbReference>
<dbReference type="GO" id="GO:0006260">
    <property type="term" value="P:DNA replication"/>
    <property type="evidence" value="ECO:0007669"/>
    <property type="project" value="UniProtKB-KW"/>
</dbReference>
<dbReference type="CDD" id="cd17748">
    <property type="entry name" value="BRCT_DNA_ligase_like"/>
    <property type="match status" value="1"/>
</dbReference>
<dbReference type="CDD" id="cd00114">
    <property type="entry name" value="LIGANc"/>
    <property type="match status" value="1"/>
</dbReference>
<dbReference type="Gene3D" id="6.20.10.30">
    <property type="match status" value="1"/>
</dbReference>
<dbReference type="Gene3D" id="1.10.150.20">
    <property type="entry name" value="5' to 3' exonuclease, C-terminal subdomain"/>
    <property type="match status" value="2"/>
</dbReference>
<dbReference type="Gene3D" id="3.40.50.10190">
    <property type="entry name" value="BRCT domain"/>
    <property type="match status" value="1"/>
</dbReference>
<dbReference type="Gene3D" id="3.30.470.30">
    <property type="entry name" value="DNA ligase/mRNA capping enzyme"/>
    <property type="match status" value="1"/>
</dbReference>
<dbReference type="Gene3D" id="1.10.287.610">
    <property type="entry name" value="Helix hairpin bin"/>
    <property type="match status" value="1"/>
</dbReference>
<dbReference type="Gene3D" id="2.40.50.140">
    <property type="entry name" value="Nucleic acid-binding proteins"/>
    <property type="match status" value="1"/>
</dbReference>
<dbReference type="HAMAP" id="MF_01588">
    <property type="entry name" value="DNA_ligase_A"/>
    <property type="match status" value="1"/>
</dbReference>
<dbReference type="InterPro" id="IPR001357">
    <property type="entry name" value="BRCT_dom"/>
</dbReference>
<dbReference type="InterPro" id="IPR036420">
    <property type="entry name" value="BRCT_dom_sf"/>
</dbReference>
<dbReference type="InterPro" id="IPR001679">
    <property type="entry name" value="DNA_ligase"/>
</dbReference>
<dbReference type="InterPro" id="IPR018239">
    <property type="entry name" value="DNA_ligase_AS"/>
</dbReference>
<dbReference type="InterPro" id="IPR033136">
    <property type="entry name" value="DNA_ligase_CS"/>
</dbReference>
<dbReference type="InterPro" id="IPR013839">
    <property type="entry name" value="DNAligase_adenylation"/>
</dbReference>
<dbReference type="InterPro" id="IPR013840">
    <property type="entry name" value="DNAligase_N"/>
</dbReference>
<dbReference type="InterPro" id="IPR012340">
    <property type="entry name" value="NA-bd_OB-fold"/>
</dbReference>
<dbReference type="InterPro" id="IPR004150">
    <property type="entry name" value="NAD_DNA_ligase_OB"/>
</dbReference>
<dbReference type="InterPro" id="IPR010994">
    <property type="entry name" value="RuvA_2-like"/>
</dbReference>
<dbReference type="InterPro" id="IPR004149">
    <property type="entry name" value="Znf_DNAligase_C4"/>
</dbReference>
<dbReference type="NCBIfam" id="TIGR00575">
    <property type="entry name" value="dnlj"/>
    <property type="match status" value="1"/>
</dbReference>
<dbReference type="NCBIfam" id="NF005932">
    <property type="entry name" value="PRK07956.1"/>
    <property type="match status" value="1"/>
</dbReference>
<dbReference type="PANTHER" id="PTHR23389">
    <property type="entry name" value="CHROMOSOME TRANSMISSION FIDELITY FACTOR 18"/>
    <property type="match status" value="1"/>
</dbReference>
<dbReference type="PANTHER" id="PTHR23389:SF9">
    <property type="entry name" value="DNA LIGASE"/>
    <property type="match status" value="1"/>
</dbReference>
<dbReference type="Pfam" id="PF00533">
    <property type="entry name" value="BRCT"/>
    <property type="match status" value="1"/>
</dbReference>
<dbReference type="Pfam" id="PF01653">
    <property type="entry name" value="DNA_ligase_aden"/>
    <property type="match status" value="1"/>
</dbReference>
<dbReference type="Pfam" id="PF03120">
    <property type="entry name" value="DNA_ligase_OB"/>
    <property type="match status" value="1"/>
</dbReference>
<dbReference type="Pfam" id="PF03119">
    <property type="entry name" value="DNA_ligase_ZBD"/>
    <property type="match status" value="1"/>
</dbReference>
<dbReference type="PIRSF" id="PIRSF001604">
    <property type="entry name" value="LigA"/>
    <property type="match status" value="1"/>
</dbReference>
<dbReference type="SMART" id="SM00292">
    <property type="entry name" value="BRCT"/>
    <property type="match status" value="1"/>
</dbReference>
<dbReference type="SMART" id="SM00532">
    <property type="entry name" value="LIGANc"/>
    <property type="match status" value="1"/>
</dbReference>
<dbReference type="SUPFAM" id="SSF52113">
    <property type="entry name" value="BRCT domain"/>
    <property type="match status" value="1"/>
</dbReference>
<dbReference type="SUPFAM" id="SSF56091">
    <property type="entry name" value="DNA ligase/mRNA capping enzyme, catalytic domain"/>
    <property type="match status" value="1"/>
</dbReference>
<dbReference type="SUPFAM" id="SSF50249">
    <property type="entry name" value="Nucleic acid-binding proteins"/>
    <property type="match status" value="1"/>
</dbReference>
<dbReference type="SUPFAM" id="SSF47781">
    <property type="entry name" value="RuvA domain 2-like"/>
    <property type="match status" value="1"/>
</dbReference>
<dbReference type="PROSITE" id="PS50172">
    <property type="entry name" value="BRCT"/>
    <property type="match status" value="1"/>
</dbReference>
<dbReference type="PROSITE" id="PS01055">
    <property type="entry name" value="DNA_LIGASE_N1"/>
    <property type="match status" value="1"/>
</dbReference>
<dbReference type="PROSITE" id="PS01056">
    <property type="entry name" value="DNA_LIGASE_N2"/>
    <property type="match status" value="1"/>
</dbReference>
<evidence type="ECO:0000255" key="1">
    <source>
        <dbReference type="HAMAP-Rule" id="MF_01588"/>
    </source>
</evidence>
<name>DNLJ2_OPITP</name>
<reference key="1">
    <citation type="journal article" date="2011" name="J. Bacteriol.">
        <title>Genome sequence of the verrucomicrobium Opitutus terrae PB90-1, an abundant inhabitant of rice paddy soil ecosystems.</title>
        <authorList>
            <person name="van Passel M.W."/>
            <person name="Kant R."/>
            <person name="Palva A."/>
            <person name="Copeland A."/>
            <person name="Lucas S."/>
            <person name="Lapidus A."/>
            <person name="Glavina del Rio T."/>
            <person name="Pitluck S."/>
            <person name="Goltsman E."/>
            <person name="Clum A."/>
            <person name="Sun H."/>
            <person name="Schmutz J."/>
            <person name="Larimer F.W."/>
            <person name="Land M.L."/>
            <person name="Hauser L."/>
            <person name="Kyrpides N."/>
            <person name="Mikhailova N."/>
            <person name="Richardson P.P."/>
            <person name="Janssen P.H."/>
            <person name="de Vos W.M."/>
            <person name="Smidt H."/>
        </authorList>
    </citation>
    <scope>NUCLEOTIDE SEQUENCE [LARGE SCALE GENOMIC DNA]</scope>
    <source>
        <strain>DSM 11246 / JCM 15787 / PB90-1</strain>
    </source>
</reference>
<proteinExistence type="inferred from homology"/>
<comment type="function">
    <text evidence="1">DNA ligase that catalyzes the formation of phosphodiester linkages between 5'-phosphoryl and 3'-hydroxyl groups in double-stranded DNA using NAD as a coenzyme and as the energy source for the reaction. It is essential for DNA replication and repair of damaged DNA.</text>
</comment>
<comment type="catalytic activity">
    <reaction evidence="1">
        <text>NAD(+) + (deoxyribonucleotide)n-3'-hydroxyl + 5'-phospho-(deoxyribonucleotide)m = (deoxyribonucleotide)n+m + AMP + beta-nicotinamide D-nucleotide.</text>
        <dbReference type="EC" id="6.5.1.2"/>
    </reaction>
</comment>
<comment type="cofactor">
    <cofactor evidence="1">
        <name>Mg(2+)</name>
        <dbReference type="ChEBI" id="CHEBI:18420"/>
    </cofactor>
    <cofactor evidence="1">
        <name>Mn(2+)</name>
        <dbReference type="ChEBI" id="CHEBI:29035"/>
    </cofactor>
</comment>
<comment type="similarity">
    <text evidence="1">Belongs to the NAD-dependent DNA ligase family. LigA subfamily.</text>
</comment>
<gene>
    <name evidence="1" type="primary">ligA2</name>
    <name type="ordered locus">Oter_2058</name>
</gene>
<protein>
    <recommendedName>
        <fullName evidence="1">DNA ligase 2</fullName>
        <ecNumber evidence="1">6.5.1.2</ecNumber>
    </recommendedName>
    <alternativeName>
        <fullName evidence="1">Polydeoxyribonucleotide synthase [NAD(+)] 2</fullName>
    </alternativeName>
</protein>
<keyword id="KW-0227">DNA damage</keyword>
<keyword id="KW-0234">DNA repair</keyword>
<keyword id="KW-0235">DNA replication</keyword>
<keyword id="KW-0436">Ligase</keyword>
<keyword id="KW-0460">Magnesium</keyword>
<keyword id="KW-0464">Manganese</keyword>
<keyword id="KW-0479">Metal-binding</keyword>
<keyword id="KW-0520">NAD</keyword>
<keyword id="KW-1185">Reference proteome</keyword>
<keyword id="KW-0862">Zinc</keyword>